<gene>
    <name type="primary">ndc80</name>
    <name type="ORF">AFUA_3G10180</name>
</gene>
<comment type="function">
    <text evidence="1">Acts as a component of the essential kinetochore-associated NDC80 complex, which is required for chromosome segregation and spindle checkpoint activity.</text>
</comment>
<comment type="subunit">
    <text evidence="1">Component of the NDC80 complex, which consists of at least ndc80, nuf2 and spc24.</text>
</comment>
<comment type="subcellular location">
    <subcellularLocation>
        <location evidence="1">Nucleus</location>
    </subcellularLocation>
    <subcellularLocation>
        <location evidence="1">Chromosome</location>
        <location evidence="1">Centromere</location>
        <location evidence="1">Kinetochore</location>
    </subcellularLocation>
    <text evidence="1">Associated with kinetochores.</text>
</comment>
<comment type="similarity">
    <text evidence="4">Belongs to the NDC80/HEC1 family.</text>
</comment>
<comment type="sequence caution" evidence="4">
    <conflict type="erroneous initiation">
        <sequence resource="EMBL-CDS" id="EAL92563"/>
    </conflict>
</comment>
<evidence type="ECO:0000250" key="1"/>
<evidence type="ECO:0000255" key="2"/>
<evidence type="ECO:0000256" key="3">
    <source>
        <dbReference type="SAM" id="MobiDB-lite"/>
    </source>
</evidence>
<evidence type="ECO:0000305" key="4"/>
<organism>
    <name type="scientific">Aspergillus fumigatus (strain ATCC MYA-4609 / CBS 101355 / FGSC A1100 / Af293)</name>
    <name type="common">Neosartorya fumigata</name>
    <dbReference type="NCBI Taxonomy" id="330879"/>
    <lineage>
        <taxon>Eukaryota</taxon>
        <taxon>Fungi</taxon>
        <taxon>Dikarya</taxon>
        <taxon>Ascomycota</taxon>
        <taxon>Pezizomycotina</taxon>
        <taxon>Eurotiomycetes</taxon>
        <taxon>Eurotiomycetidae</taxon>
        <taxon>Eurotiales</taxon>
        <taxon>Aspergillaceae</taxon>
        <taxon>Aspergillus</taxon>
        <taxon>Aspergillus subgen. Fumigati</taxon>
    </lineage>
</organism>
<keyword id="KW-0131">Cell cycle</keyword>
<keyword id="KW-0132">Cell division</keyword>
<keyword id="KW-0137">Centromere</keyword>
<keyword id="KW-0158">Chromosome</keyword>
<keyword id="KW-0175">Coiled coil</keyword>
<keyword id="KW-0995">Kinetochore</keyword>
<keyword id="KW-0498">Mitosis</keyword>
<keyword id="KW-0539">Nucleus</keyword>
<keyword id="KW-1185">Reference proteome</keyword>
<feature type="chain" id="PRO_0000246632" description="Probable kinetochore protein ndc80">
    <location>
        <begin position="1"/>
        <end position="736"/>
    </location>
</feature>
<feature type="region of interest" description="Disordered" evidence="3">
    <location>
        <begin position="57"/>
        <end position="76"/>
    </location>
</feature>
<feature type="region of interest" description="Disordered" evidence="3">
    <location>
        <begin position="105"/>
        <end position="138"/>
    </location>
</feature>
<feature type="coiled-coil region" evidence="2">
    <location>
        <begin position="327"/>
        <end position="492"/>
    </location>
</feature>
<feature type="coiled-coil region" evidence="2">
    <location>
        <begin position="586"/>
        <end position="690"/>
    </location>
</feature>
<feature type="compositionally biased region" description="Polar residues" evidence="3">
    <location>
        <begin position="57"/>
        <end position="70"/>
    </location>
</feature>
<feature type="compositionally biased region" description="Low complexity" evidence="3">
    <location>
        <begin position="109"/>
        <end position="124"/>
    </location>
</feature>
<protein>
    <recommendedName>
        <fullName>Probable kinetochore protein ndc80</fullName>
    </recommendedName>
</protein>
<proteinExistence type="inferred from homology"/>
<sequence>MRSDGLRLTNIFLIQTLGSVQNYSALPQPSSALKRTSSIGYQNPPFTSQHTRSMSLLNSASRPQQPNFQRSSSGGAFGADAGLSSVRRSVSSNIFHGASVGRPSYAPGSLSASSASQSLQRRSSVFSRPSVGGPMGHQSFFTQVPNAAGVPRDPRPLRDRSFQARIGQELLEYLTHNNFELEMKHSLGQNTLRSPTQKDFNYIFQFLYHRIDPGYRFQKSMDAEVPPILKQLRYPFEKGITKSQIAAVGGQNWPTFLGMLHWLMQLAQMMDRFVLGEYDEACAEMGVDVSGDRIIFRFLTGAYHDWLQGGEDEDDETAEKRLVPHIESMAQEFERGNEKYMQEMQVLEAENRALRDQIEELEKNAPDMAKLDKHFRILEDDKRKFEDYNQNVQGKIEKYENRIKFLEEEIQKVEAELQAAEEERSSLQSSVDQQGITIQDIDRMNTERDRLQKSLEDTTARLEETHARVMEKEAEASRKLEDLEEIVKVYNTLGYQTSLIPSTAVNAKGQDYELSLNINDNSFSASQIGGLPNRISSEADRLLAEPFTGYHPAHLLNLDLRGMVRSSLQALRKEINERRKRAIDDDLERRNLLDNIKEAMDEKRSEVEALEHKRRAAEEEFERLKEITTTQKLASDAQIEKMEKELAKMRATLSESVQLMEQREMNTNIEYEQLTLRANALREELHTNVESMLNDVIRFKVHIQKGLEDYESFVVDEVEQELGGDLPATKDVTSQT</sequence>
<dbReference type="EMBL" id="AAHF01000002">
    <property type="protein sequence ID" value="EAL92563.1"/>
    <property type="status" value="ALT_INIT"/>
    <property type="molecule type" value="Genomic_DNA"/>
</dbReference>
<dbReference type="RefSeq" id="XP_754601.1">
    <property type="nucleotide sequence ID" value="XM_749508.1"/>
</dbReference>
<dbReference type="SMR" id="Q4WXP0"/>
<dbReference type="FunCoup" id="Q4WXP0">
    <property type="interactions" value="278"/>
</dbReference>
<dbReference type="STRING" id="330879.Q4WXP0"/>
<dbReference type="GeneID" id="3511788"/>
<dbReference type="KEGG" id="afm:AFUA_3G10180"/>
<dbReference type="eggNOG" id="KOG0995">
    <property type="taxonomic scope" value="Eukaryota"/>
</dbReference>
<dbReference type="HOGENOM" id="CLU_012583_0_0_1"/>
<dbReference type="InParanoid" id="Q4WXP0"/>
<dbReference type="OrthoDB" id="7459479at2759"/>
<dbReference type="Proteomes" id="UP000002530">
    <property type="component" value="Chromosome 3"/>
</dbReference>
<dbReference type="GO" id="GO:0031262">
    <property type="term" value="C:Ndc80 complex"/>
    <property type="evidence" value="ECO:0000250"/>
    <property type="project" value="UniProtKB"/>
</dbReference>
<dbReference type="GO" id="GO:0005634">
    <property type="term" value="C:nucleus"/>
    <property type="evidence" value="ECO:0007669"/>
    <property type="project" value="UniProtKB-SubCell"/>
</dbReference>
<dbReference type="GO" id="GO:0008017">
    <property type="term" value="F:microtubule binding"/>
    <property type="evidence" value="ECO:0000250"/>
    <property type="project" value="UniProtKB"/>
</dbReference>
<dbReference type="GO" id="GO:0051315">
    <property type="term" value="P:attachment of mitotic spindle microtubules to kinetochore"/>
    <property type="evidence" value="ECO:0000318"/>
    <property type="project" value="GO_Central"/>
</dbReference>
<dbReference type="GO" id="GO:0051301">
    <property type="term" value="P:cell division"/>
    <property type="evidence" value="ECO:0007669"/>
    <property type="project" value="UniProtKB-KW"/>
</dbReference>
<dbReference type="GO" id="GO:1990758">
    <property type="term" value="P:mitotic sister chromatid biorientation"/>
    <property type="evidence" value="ECO:0000250"/>
    <property type="project" value="UniProtKB"/>
</dbReference>
<dbReference type="FunFam" id="1.10.418.30:FF:000001">
    <property type="entry name" value="Probable kinetochore protein ndc80"/>
    <property type="match status" value="1"/>
</dbReference>
<dbReference type="Gene3D" id="1.10.287.510">
    <property type="entry name" value="Helix hairpin bin"/>
    <property type="match status" value="1"/>
</dbReference>
<dbReference type="Gene3D" id="1.10.418.30">
    <property type="entry name" value="Ncd80 complex, Ncd80 subunit"/>
    <property type="match status" value="1"/>
</dbReference>
<dbReference type="InterPro" id="IPR005550">
    <property type="entry name" value="Kinetochore_Ndc80"/>
</dbReference>
<dbReference type="InterPro" id="IPR055260">
    <property type="entry name" value="Ndc80_CH"/>
</dbReference>
<dbReference type="InterPro" id="IPR038273">
    <property type="entry name" value="Ndc80_sf"/>
</dbReference>
<dbReference type="PANTHER" id="PTHR10643">
    <property type="entry name" value="KINETOCHORE PROTEIN NDC80"/>
    <property type="match status" value="1"/>
</dbReference>
<dbReference type="PANTHER" id="PTHR10643:SF2">
    <property type="entry name" value="KINETOCHORE PROTEIN NDC80 HOMOLOG"/>
    <property type="match status" value="1"/>
</dbReference>
<dbReference type="Pfam" id="PF03801">
    <property type="entry name" value="Ndc80_HEC"/>
    <property type="match status" value="1"/>
</dbReference>
<dbReference type="Pfam" id="PF24487">
    <property type="entry name" value="NDC80_loop"/>
    <property type="match status" value="1"/>
</dbReference>
<name>NDC80_ASPFU</name>
<accession>Q4WXP0</accession>
<reference key="1">
    <citation type="journal article" date="2005" name="Nature">
        <title>Genomic sequence of the pathogenic and allergenic filamentous fungus Aspergillus fumigatus.</title>
        <authorList>
            <person name="Nierman W.C."/>
            <person name="Pain A."/>
            <person name="Anderson M.J."/>
            <person name="Wortman J.R."/>
            <person name="Kim H.S."/>
            <person name="Arroyo J."/>
            <person name="Berriman M."/>
            <person name="Abe K."/>
            <person name="Archer D.B."/>
            <person name="Bermejo C."/>
            <person name="Bennett J.W."/>
            <person name="Bowyer P."/>
            <person name="Chen D."/>
            <person name="Collins M."/>
            <person name="Coulsen R."/>
            <person name="Davies R."/>
            <person name="Dyer P.S."/>
            <person name="Farman M.L."/>
            <person name="Fedorova N."/>
            <person name="Fedorova N.D."/>
            <person name="Feldblyum T.V."/>
            <person name="Fischer R."/>
            <person name="Fosker N."/>
            <person name="Fraser A."/>
            <person name="Garcia J.L."/>
            <person name="Garcia M.J."/>
            <person name="Goble A."/>
            <person name="Goldman G.H."/>
            <person name="Gomi K."/>
            <person name="Griffith-Jones S."/>
            <person name="Gwilliam R."/>
            <person name="Haas B.J."/>
            <person name="Haas H."/>
            <person name="Harris D.E."/>
            <person name="Horiuchi H."/>
            <person name="Huang J."/>
            <person name="Humphray S."/>
            <person name="Jimenez J."/>
            <person name="Keller N."/>
            <person name="Khouri H."/>
            <person name="Kitamoto K."/>
            <person name="Kobayashi T."/>
            <person name="Konzack S."/>
            <person name="Kulkarni R."/>
            <person name="Kumagai T."/>
            <person name="Lafton A."/>
            <person name="Latge J.-P."/>
            <person name="Li W."/>
            <person name="Lord A."/>
            <person name="Lu C."/>
            <person name="Majoros W.H."/>
            <person name="May G.S."/>
            <person name="Miller B.L."/>
            <person name="Mohamoud Y."/>
            <person name="Molina M."/>
            <person name="Monod M."/>
            <person name="Mouyna I."/>
            <person name="Mulligan S."/>
            <person name="Murphy L.D."/>
            <person name="O'Neil S."/>
            <person name="Paulsen I."/>
            <person name="Penalva M.A."/>
            <person name="Pertea M."/>
            <person name="Price C."/>
            <person name="Pritchard B.L."/>
            <person name="Quail M.A."/>
            <person name="Rabbinowitsch E."/>
            <person name="Rawlins N."/>
            <person name="Rajandream M.A."/>
            <person name="Reichard U."/>
            <person name="Renauld H."/>
            <person name="Robson G.D."/>
            <person name="Rodriguez de Cordoba S."/>
            <person name="Rodriguez-Pena J.M."/>
            <person name="Ronning C.M."/>
            <person name="Rutter S."/>
            <person name="Salzberg S.L."/>
            <person name="Sanchez M."/>
            <person name="Sanchez-Ferrero J.C."/>
            <person name="Saunders D."/>
            <person name="Seeger K."/>
            <person name="Squares R."/>
            <person name="Squares S."/>
            <person name="Takeuchi M."/>
            <person name="Tekaia F."/>
            <person name="Turner G."/>
            <person name="Vazquez de Aldana C.R."/>
            <person name="Weidman J."/>
            <person name="White O."/>
            <person name="Woodward J.R."/>
            <person name="Yu J.-H."/>
            <person name="Fraser C.M."/>
            <person name="Galagan J.E."/>
            <person name="Asai K."/>
            <person name="Machida M."/>
            <person name="Hall N."/>
            <person name="Barrell B.G."/>
            <person name="Denning D.W."/>
        </authorList>
    </citation>
    <scope>NUCLEOTIDE SEQUENCE [LARGE SCALE GENOMIC DNA]</scope>
    <source>
        <strain>ATCC MYA-4609 / CBS 101355 / FGSC A1100 / Af293</strain>
    </source>
</reference>